<dbReference type="EC" id="2.1.2.11" evidence="1"/>
<dbReference type="EMBL" id="AE014184">
    <property type="protein sequence ID" value="AAO44357.1"/>
    <property type="molecule type" value="Genomic_DNA"/>
</dbReference>
<dbReference type="SMR" id="Q83GK7"/>
<dbReference type="STRING" id="203267.TWT_260"/>
<dbReference type="KEGG" id="twh:TWT_260"/>
<dbReference type="eggNOG" id="COG0413">
    <property type="taxonomic scope" value="Bacteria"/>
</dbReference>
<dbReference type="HOGENOM" id="CLU_036645_1_0_11"/>
<dbReference type="UniPathway" id="UPA00028">
    <property type="reaction ID" value="UER00003"/>
</dbReference>
<dbReference type="Proteomes" id="UP000002200">
    <property type="component" value="Chromosome"/>
</dbReference>
<dbReference type="GO" id="GO:0005737">
    <property type="term" value="C:cytoplasm"/>
    <property type="evidence" value="ECO:0007669"/>
    <property type="project" value="UniProtKB-SubCell"/>
</dbReference>
<dbReference type="GO" id="GO:0003864">
    <property type="term" value="F:3-methyl-2-oxobutanoate hydroxymethyltransferase activity"/>
    <property type="evidence" value="ECO:0007669"/>
    <property type="project" value="UniProtKB-UniRule"/>
</dbReference>
<dbReference type="GO" id="GO:0000287">
    <property type="term" value="F:magnesium ion binding"/>
    <property type="evidence" value="ECO:0007669"/>
    <property type="project" value="TreeGrafter"/>
</dbReference>
<dbReference type="GO" id="GO:0015940">
    <property type="term" value="P:pantothenate biosynthetic process"/>
    <property type="evidence" value="ECO:0007669"/>
    <property type="project" value="UniProtKB-UniRule"/>
</dbReference>
<dbReference type="CDD" id="cd06557">
    <property type="entry name" value="KPHMT-like"/>
    <property type="match status" value="1"/>
</dbReference>
<dbReference type="FunFam" id="3.20.20.60:FF:000003">
    <property type="entry name" value="3-methyl-2-oxobutanoate hydroxymethyltransferase"/>
    <property type="match status" value="1"/>
</dbReference>
<dbReference type="Gene3D" id="3.20.20.60">
    <property type="entry name" value="Phosphoenolpyruvate-binding domains"/>
    <property type="match status" value="1"/>
</dbReference>
<dbReference type="HAMAP" id="MF_00156">
    <property type="entry name" value="PanB"/>
    <property type="match status" value="1"/>
</dbReference>
<dbReference type="InterPro" id="IPR003700">
    <property type="entry name" value="Pantoate_hydroxy_MeTrfase"/>
</dbReference>
<dbReference type="InterPro" id="IPR015813">
    <property type="entry name" value="Pyrv/PenolPyrv_kinase-like_dom"/>
</dbReference>
<dbReference type="InterPro" id="IPR040442">
    <property type="entry name" value="Pyrv_kinase-like_dom_sf"/>
</dbReference>
<dbReference type="NCBIfam" id="TIGR00222">
    <property type="entry name" value="panB"/>
    <property type="match status" value="1"/>
</dbReference>
<dbReference type="NCBIfam" id="NF001452">
    <property type="entry name" value="PRK00311.1"/>
    <property type="match status" value="1"/>
</dbReference>
<dbReference type="PANTHER" id="PTHR20881">
    <property type="entry name" value="3-METHYL-2-OXOBUTANOATE HYDROXYMETHYLTRANSFERASE"/>
    <property type="match status" value="1"/>
</dbReference>
<dbReference type="PANTHER" id="PTHR20881:SF0">
    <property type="entry name" value="3-METHYL-2-OXOBUTANOATE HYDROXYMETHYLTRANSFERASE"/>
    <property type="match status" value="1"/>
</dbReference>
<dbReference type="Pfam" id="PF02548">
    <property type="entry name" value="Pantoate_transf"/>
    <property type="match status" value="1"/>
</dbReference>
<dbReference type="PIRSF" id="PIRSF000388">
    <property type="entry name" value="Pantoate_hydroxy_MeTrfase"/>
    <property type="match status" value="1"/>
</dbReference>
<dbReference type="SUPFAM" id="SSF51621">
    <property type="entry name" value="Phosphoenolpyruvate/pyruvate domain"/>
    <property type="match status" value="1"/>
</dbReference>
<keyword id="KW-0963">Cytoplasm</keyword>
<keyword id="KW-0460">Magnesium</keyword>
<keyword id="KW-0479">Metal-binding</keyword>
<keyword id="KW-0566">Pantothenate biosynthesis</keyword>
<keyword id="KW-1185">Reference proteome</keyword>
<keyword id="KW-0808">Transferase</keyword>
<protein>
    <recommendedName>
        <fullName evidence="1">3-methyl-2-oxobutanoate hydroxymethyltransferase</fullName>
        <ecNumber evidence="1">2.1.2.11</ecNumber>
    </recommendedName>
    <alternativeName>
        <fullName evidence="1">Ketopantoate hydroxymethyltransferase</fullName>
        <shortName evidence="1">KPHMT</shortName>
    </alternativeName>
</protein>
<sequence>MICMSRKPSPTRRTRIHRFHKGSCGRKLVGLTCYDFSTARVLSDCELDFLLVGDSASGVIYGYENTGSVCLDEIIYLAAGVVRGAPNSFIIVDLPFGTYEKSDELAVETAIEVIKRTGASAVKLEGGARMACRISAIVRAGVPVMGHIGFTPQTINALGGYKIQGRDNADLIYLDAQAVEQAGAFAVVMEMVTEDLAKTITSEIKITTIGVGAGRYTDGQLLVINDLIGLSEKKITFAPRYASIDNTVASCVKLWRKDVLEGNFPQKDHIPA</sequence>
<reference key="1">
    <citation type="journal article" date="2003" name="Genome Res.">
        <title>Tropheryma whipplei twist: a human pathogenic Actinobacteria with a reduced genome.</title>
        <authorList>
            <person name="Raoult D."/>
            <person name="Ogata H."/>
            <person name="Audic S."/>
            <person name="Robert C."/>
            <person name="Suhre K."/>
            <person name="Drancourt M."/>
            <person name="Claverie J.-M."/>
        </authorList>
    </citation>
    <scope>NUCLEOTIDE SEQUENCE [LARGE SCALE GENOMIC DNA]</scope>
    <source>
        <strain>Twist</strain>
    </source>
</reference>
<accession>Q83GK7</accession>
<gene>
    <name evidence="1" type="primary">panB</name>
    <name type="synonym">twt260</name>
    <name type="ordered locus">TWT_260</name>
</gene>
<organism>
    <name type="scientific">Tropheryma whipplei (strain Twist)</name>
    <name type="common">Whipple's bacillus</name>
    <dbReference type="NCBI Taxonomy" id="203267"/>
    <lineage>
        <taxon>Bacteria</taxon>
        <taxon>Bacillati</taxon>
        <taxon>Actinomycetota</taxon>
        <taxon>Actinomycetes</taxon>
        <taxon>Micrococcales</taxon>
        <taxon>Tropherymataceae</taxon>
        <taxon>Tropheryma</taxon>
    </lineage>
</organism>
<proteinExistence type="inferred from homology"/>
<name>PANB_TROWT</name>
<evidence type="ECO:0000255" key="1">
    <source>
        <dbReference type="HAMAP-Rule" id="MF_00156"/>
    </source>
</evidence>
<feature type="chain" id="PRO_0000297405" description="3-methyl-2-oxobutanoate hydroxymethyltransferase">
    <location>
        <begin position="1"/>
        <end position="272"/>
    </location>
</feature>
<feature type="active site" description="Proton acceptor" evidence="1">
    <location>
        <position position="190"/>
    </location>
</feature>
<feature type="binding site" evidence="1">
    <location>
        <begin position="54"/>
        <end position="55"/>
    </location>
    <ligand>
        <name>3-methyl-2-oxobutanoate</name>
        <dbReference type="ChEBI" id="CHEBI:11851"/>
    </ligand>
</feature>
<feature type="binding site" evidence="1">
    <location>
        <position position="54"/>
    </location>
    <ligand>
        <name>Mg(2+)</name>
        <dbReference type="ChEBI" id="CHEBI:18420"/>
    </ligand>
</feature>
<feature type="binding site" evidence="1">
    <location>
        <position position="93"/>
    </location>
    <ligand>
        <name>3-methyl-2-oxobutanoate</name>
        <dbReference type="ChEBI" id="CHEBI:11851"/>
    </ligand>
</feature>
<feature type="binding site" evidence="1">
    <location>
        <position position="93"/>
    </location>
    <ligand>
        <name>Mg(2+)</name>
        <dbReference type="ChEBI" id="CHEBI:18420"/>
    </ligand>
</feature>
<feature type="binding site" evidence="1">
    <location>
        <position position="123"/>
    </location>
    <ligand>
        <name>3-methyl-2-oxobutanoate</name>
        <dbReference type="ChEBI" id="CHEBI:11851"/>
    </ligand>
</feature>
<feature type="binding site" evidence="1">
    <location>
        <position position="125"/>
    </location>
    <ligand>
        <name>Mg(2+)</name>
        <dbReference type="ChEBI" id="CHEBI:18420"/>
    </ligand>
</feature>
<comment type="function">
    <text evidence="1">Catalyzes the reversible reaction in which hydroxymethyl group from 5,10-methylenetetrahydrofolate is transferred onto alpha-ketoisovalerate to form ketopantoate.</text>
</comment>
<comment type="catalytic activity">
    <reaction evidence="1">
        <text>3-methyl-2-oxobutanoate + (6R)-5,10-methylene-5,6,7,8-tetrahydrofolate + H2O = 2-dehydropantoate + (6S)-5,6,7,8-tetrahydrofolate</text>
        <dbReference type="Rhea" id="RHEA:11824"/>
        <dbReference type="ChEBI" id="CHEBI:11561"/>
        <dbReference type="ChEBI" id="CHEBI:11851"/>
        <dbReference type="ChEBI" id="CHEBI:15377"/>
        <dbReference type="ChEBI" id="CHEBI:15636"/>
        <dbReference type="ChEBI" id="CHEBI:57453"/>
        <dbReference type="EC" id="2.1.2.11"/>
    </reaction>
</comment>
<comment type="cofactor">
    <cofactor evidence="1">
        <name>Mg(2+)</name>
        <dbReference type="ChEBI" id="CHEBI:18420"/>
    </cofactor>
    <text evidence="1">Binds 1 Mg(2+) ion per subunit.</text>
</comment>
<comment type="pathway">
    <text evidence="1">Cofactor biosynthesis; (R)-pantothenate biosynthesis; (R)-pantoate from 3-methyl-2-oxobutanoate: step 1/2.</text>
</comment>
<comment type="subunit">
    <text evidence="1">Homodecamer; pentamer of dimers.</text>
</comment>
<comment type="subcellular location">
    <subcellularLocation>
        <location evidence="1">Cytoplasm</location>
    </subcellularLocation>
</comment>
<comment type="similarity">
    <text evidence="1">Belongs to the PanB family.</text>
</comment>